<evidence type="ECO:0000250" key="1"/>
<evidence type="ECO:0000255" key="2"/>
<evidence type="ECO:0000255" key="3">
    <source>
        <dbReference type="PROSITE-ProRule" id="PRU00224"/>
    </source>
</evidence>
<evidence type="ECO:0000256" key="4">
    <source>
        <dbReference type="SAM" id="MobiDB-lite"/>
    </source>
</evidence>
<evidence type="ECO:0000269" key="5">
    <source>
    </source>
</evidence>
<evidence type="ECO:0000269" key="6">
    <source>
    </source>
</evidence>
<evidence type="ECO:0000269" key="7">
    <source>
    </source>
</evidence>
<evidence type="ECO:0000269" key="8">
    <source>
    </source>
</evidence>
<evidence type="ECO:0000269" key="9">
    <source>
    </source>
</evidence>
<evidence type="ECO:0000303" key="10">
    <source>
    </source>
</evidence>
<evidence type="ECO:0000303" key="11">
    <source ref="2"/>
</evidence>
<evidence type="ECO:0000305" key="12"/>
<evidence type="ECO:0007744" key="13">
    <source>
    </source>
</evidence>
<evidence type="ECO:0007744" key="14">
    <source>
    </source>
</evidence>
<evidence type="ECO:0007744" key="15">
    <source>
    </source>
</evidence>
<evidence type="ECO:0007744" key="16">
    <source>
    </source>
</evidence>
<evidence type="ECO:0007744" key="17">
    <source>
    </source>
</evidence>
<evidence type="ECO:0007744" key="18">
    <source>
    </source>
</evidence>
<evidence type="ECO:0007829" key="19">
    <source>
        <dbReference type="PDB" id="2DK7"/>
    </source>
</evidence>
<evidence type="ECO:0007829" key="20">
    <source>
        <dbReference type="PDB" id="2DOD"/>
    </source>
</evidence>
<evidence type="ECO:0007829" key="21">
    <source>
        <dbReference type="PDB" id="2DOF"/>
    </source>
</evidence>
<evidence type="ECO:0007829" key="22">
    <source>
        <dbReference type="PDB" id="2E71"/>
    </source>
</evidence>
<evidence type="ECO:0007829" key="23">
    <source>
        <dbReference type="PDB" id="2MW9"/>
    </source>
</evidence>
<evidence type="ECO:0007829" key="24">
    <source>
        <dbReference type="PDB" id="3HFH"/>
    </source>
</evidence>
<evidence type="ECO:0007829" key="25">
    <source>
        <dbReference type="PDB" id="3Q1I"/>
    </source>
</evidence>
<evidence type="ECO:0007829" key="26">
    <source>
        <dbReference type="PDB" id="4FQG"/>
    </source>
</evidence>
<evidence type="ECO:0007829" key="27">
    <source>
        <dbReference type="PDB" id="8Q7N"/>
    </source>
</evidence>
<accession>O14776</accession>
<accession>Q2NKN2</accession>
<accession>Q59EA1</accession>
<sequence>MAERGGDGGESERFNPGELRMAQQQALRFRGPAPPPNAVMRGPPPLMRPPPPFGMMRGPPPPPRPPFGRPPFDPNMPPMPPPGGIPPPMGPPHLQRPPFMPPPMSSMPPPPGMMFPPGMPPVTAPGTPALPPTEEIWVENKTPDGKVYYYNARTRESAWTKPDGVKVIQQSELTPMLAAQAQVQAQAQAQAQAQAQAQAQAQAQAQAQAQAQAQAQAQAQAQAQAQAQAQAQAQAQAQAQAQVQAQVQAQVQAQAVGASTPTTSSPAPAVSTSTSSSTPSSTTSTTTTATSVAQTVSTPTTQDQTPSSAVSVATPTVSVSTPAPTATPVQTVPQPHPQTLPPAVPHSVPQPTTAIPAFPPVMVPPFRVPLPGMPIPLPGVAMMQIVSCPYVKTVATTKTGVLPGMAPPIVPMIHPQVAIAASPATLAGATAVSEWTEYKTADGKTYYYNNRTLESTWEKPQELKEKEKLEEKIKEPIKEPSEEPLPMETEEEDPKEEPIKEIKEEPKEEEMTEEEKAAQKAKPVATAPIPGTPWCVVWTGDERVFFYNPTTRLSMWDRPDDLIGRADVDKIIQEPPHKKGMEELKKLRHPTPTMLSIQKWQFSMSAIKEEQELMEEINEDEPVKAKKRKRDDNKDIDSEKEAAMEAEIKAARERAIVPLEARMKQFKDMLLERGVSAFSTWEKELHKIVFDPRYLLLNPKERKQVFDQYVKTRAEEERREKKNKIMQAKEDFKKMMEEAKFNPRATFSEFAAKHAKDSRFKAIEKMKDREALFNEFVAAARKKEKEDSKTRGEKIKSDFFELLSNHHLDSQSRWSKVKDKVESDPRYKAVDSSSMREDLFKQYIEKIAKNLDSEKEKELERQARIEASLREREREVQKARSEQTKEIDREREQHKREEAIQNFKALLSDMVRSSDVSWSDTRRTLRKDHRWESGSLLEREEKEKLFNEHIEALTKKKREHFRQLLDETSAITLTSTWKEVKKIIKEDPRCIKFSSSDRKKQREFEEYIRDKYITAKADFRTLLKETKFITYRSKKLIQESDQHLKDVEKILQNDKRYLVLDCVPEERRKLIVAYVDDLDRRGPPPPPTASEPTRRSTK</sequence>
<feature type="chain" id="PRO_0000076063" description="Transcription elongation regulator 1">
    <location>
        <begin position="1"/>
        <end position="1098"/>
    </location>
</feature>
<feature type="domain" description="WW 1" evidence="3">
    <location>
        <begin position="131"/>
        <end position="164"/>
    </location>
</feature>
<feature type="domain" description="WW 2" evidence="3">
    <location>
        <begin position="429"/>
        <end position="462"/>
    </location>
</feature>
<feature type="domain" description="WW 3" evidence="3">
    <location>
        <begin position="528"/>
        <end position="561"/>
    </location>
</feature>
<feature type="domain" description="FF 1">
    <location>
        <begin position="659"/>
        <end position="712"/>
    </location>
</feature>
<feature type="domain" description="FF 2">
    <location>
        <begin position="725"/>
        <end position="779"/>
    </location>
</feature>
<feature type="domain" description="FF 3">
    <location>
        <begin position="791"/>
        <end position="846"/>
    </location>
</feature>
<feature type="domain" description="FF 4">
    <location>
        <begin position="896"/>
        <end position="952"/>
    </location>
</feature>
<feature type="domain" description="FF 5">
    <location>
        <begin position="954"/>
        <end position="1010"/>
    </location>
</feature>
<feature type="domain" description="FF 6">
    <location>
        <begin position="1012"/>
        <end position="1077"/>
    </location>
</feature>
<feature type="region of interest" description="Disordered" evidence="4">
    <location>
        <begin position="1"/>
        <end position="105"/>
    </location>
</feature>
<feature type="region of interest" description="Disordered" evidence="4">
    <location>
        <begin position="259"/>
        <end position="348"/>
    </location>
</feature>
<feature type="region of interest" description="Disordered" evidence="4">
    <location>
        <begin position="469"/>
        <end position="526"/>
    </location>
</feature>
<feature type="region of interest" description="Disordered" evidence="4">
    <location>
        <begin position="615"/>
        <end position="640"/>
    </location>
</feature>
<feature type="region of interest" description="Disordered" evidence="4">
    <location>
        <begin position="870"/>
        <end position="895"/>
    </location>
</feature>
<feature type="region of interest" description="Disordered" evidence="4">
    <location>
        <begin position="1076"/>
        <end position="1098"/>
    </location>
</feature>
<feature type="coiled-coil region" evidence="2">
    <location>
        <begin position="184"/>
        <end position="244"/>
    </location>
</feature>
<feature type="coiled-coil region" evidence="2">
    <location>
        <begin position="606"/>
        <end position="655"/>
    </location>
</feature>
<feature type="coiled-coil region" evidence="2">
    <location>
        <begin position="844"/>
        <end position="906"/>
    </location>
</feature>
<feature type="short sequence motif" description="Nuclear localization signal" evidence="2">
    <location>
        <begin position="626"/>
        <end position="630"/>
    </location>
</feature>
<feature type="compositionally biased region" description="Basic and acidic residues" evidence="4">
    <location>
        <begin position="1"/>
        <end position="15"/>
    </location>
</feature>
<feature type="compositionally biased region" description="Pro residues" evidence="4">
    <location>
        <begin position="32"/>
        <end position="105"/>
    </location>
</feature>
<feature type="compositionally biased region" description="Low complexity" evidence="4">
    <location>
        <begin position="259"/>
        <end position="333"/>
    </location>
</feature>
<feature type="compositionally biased region" description="Pro residues" evidence="4">
    <location>
        <begin position="334"/>
        <end position="344"/>
    </location>
</feature>
<feature type="compositionally biased region" description="Basic and acidic residues" evidence="4">
    <location>
        <begin position="469"/>
        <end position="481"/>
    </location>
</feature>
<feature type="compositionally biased region" description="Basic and acidic residues" evidence="4">
    <location>
        <begin position="496"/>
        <end position="506"/>
    </location>
</feature>
<feature type="compositionally biased region" description="Basic and acidic residues" evidence="4">
    <location>
        <begin position="630"/>
        <end position="640"/>
    </location>
</feature>
<feature type="modified residue" description="Phosphoserine" evidence="13">
    <location>
        <position position="11"/>
    </location>
</feature>
<feature type="modified residue" description="Omega-N-methylarginine" evidence="14">
    <location>
        <position position="20"/>
    </location>
</feature>
<feature type="modified residue" description="Asymmetric dimethylarginine" evidence="14">
    <location>
        <position position="28"/>
    </location>
</feature>
<feature type="modified residue" description="Asymmetric dimethylarginine" evidence="14">
    <location>
        <position position="30"/>
    </location>
</feature>
<feature type="modified residue" description="Asymmetric dimethylarginine" evidence="14">
    <location>
        <position position="41"/>
    </location>
</feature>
<feature type="modified residue" description="Asymmetric dimethylarginine" evidence="14">
    <location>
        <position position="48"/>
    </location>
</feature>
<feature type="modified residue" description="Phosphoserine" evidence="13">
    <location>
        <position position="638"/>
    </location>
</feature>
<feature type="modified residue" description="Phosphoserine" evidence="13">
    <location>
        <position position="834"/>
    </location>
</feature>
<feature type="modified residue" description="Phosphoserine" evidence="13">
    <location>
        <position position="933"/>
    </location>
</feature>
<feature type="cross-link" description="Glycyl lysine isopeptide (Lys-Gly) (interchain with G-Cter in SUMO2)" evidence="15 16 17 18">
    <location>
        <position position="503"/>
    </location>
</feature>
<feature type="cross-link" description="Glycyl lysine isopeptide (Lys-Gly) (interchain with G-Cter in SUMO2)" evidence="18">
    <location>
        <position position="507"/>
    </location>
</feature>
<feature type="cross-link" description="Glycyl lysine isopeptide (Lys-Gly) (interchain with G-Cter in SUMO2)" evidence="18">
    <location>
        <position position="608"/>
    </location>
</feature>
<feature type="splice variant" id="VSP_026933" description="In isoform 2." evidence="10 11">
    <location>
        <begin position="379"/>
        <end position="399"/>
    </location>
</feature>
<feature type="mutagenesis site" description="Reduces repression of transcription by 35%. Reduces repression of transcription by 63%; when associated with 446-AAA-448." evidence="7">
    <original>YYY</original>
    <variation>AAA</variation>
    <location>
        <begin position="148"/>
        <end position="150"/>
    </location>
</feature>
<feature type="mutagenesis site" description="Loss of interaction with SF1. Reduces repression of transcription by 35%. Reduces repression of transcription by 63%; when associated with 148-AAA-150." evidence="7">
    <original>YYY</original>
    <variation>AAA</variation>
    <location>
        <begin position="446"/>
        <end position="448"/>
    </location>
</feature>
<feature type="mutagenesis site" description="No effect." evidence="7">
    <original>FFY</original>
    <variation>AAA</variation>
    <location>
        <begin position="545"/>
        <end position="547"/>
    </location>
</feature>
<feature type="sequence conflict" description="In Ref. 1; AAB80727." evidence="12" ref="1">
    <original>P</original>
    <variation>R</variation>
    <location>
        <position position="324"/>
    </location>
</feature>
<feature type="strand" evidence="25">
    <location>
        <begin position="103"/>
        <end position="105"/>
    </location>
</feature>
<feature type="strand" evidence="23">
    <location>
        <begin position="435"/>
        <end position="440"/>
    </location>
</feature>
<feature type="turn" evidence="23">
    <location>
        <begin position="441"/>
        <end position="443"/>
    </location>
</feature>
<feature type="strand" evidence="23">
    <location>
        <begin position="444"/>
        <end position="449"/>
    </location>
</feature>
<feature type="turn" evidence="23">
    <location>
        <begin position="450"/>
        <end position="453"/>
    </location>
</feature>
<feature type="strand" evidence="23">
    <location>
        <begin position="454"/>
        <end position="458"/>
    </location>
</feature>
<feature type="turn" evidence="23">
    <location>
        <begin position="461"/>
        <end position="463"/>
    </location>
</feature>
<feature type="strand" evidence="19">
    <location>
        <begin position="523"/>
        <end position="528"/>
    </location>
</feature>
<feature type="strand" evidence="19">
    <location>
        <begin position="530"/>
        <end position="533"/>
    </location>
</feature>
<feature type="strand" evidence="19">
    <location>
        <begin position="535"/>
        <end position="542"/>
    </location>
</feature>
<feature type="strand" evidence="19">
    <location>
        <begin position="544"/>
        <end position="548"/>
    </location>
</feature>
<feature type="turn" evidence="19">
    <location>
        <begin position="549"/>
        <end position="552"/>
    </location>
</feature>
<feature type="turn" evidence="19">
    <location>
        <begin position="560"/>
        <end position="564"/>
    </location>
</feature>
<feature type="helix" evidence="19">
    <location>
        <begin position="567"/>
        <end position="573"/>
    </location>
</feature>
<feature type="turn" evidence="19">
    <location>
        <begin position="576"/>
        <end position="578"/>
    </location>
</feature>
<feature type="strand" evidence="20">
    <location>
        <begin position="652"/>
        <end position="656"/>
    </location>
</feature>
<feature type="turn" evidence="24">
    <location>
        <begin position="661"/>
        <end position="663"/>
    </location>
</feature>
<feature type="helix" evidence="24">
    <location>
        <begin position="669"/>
        <end position="672"/>
    </location>
</feature>
<feature type="strand" evidence="24">
    <location>
        <begin position="677"/>
        <end position="679"/>
    </location>
</feature>
<feature type="helix" evidence="27">
    <location>
        <begin position="681"/>
        <end position="688"/>
    </location>
</feature>
<feature type="helix" evidence="24">
    <location>
        <begin position="692"/>
        <end position="696"/>
    </location>
</feature>
<feature type="helix" evidence="24">
    <location>
        <begin position="705"/>
        <end position="710"/>
    </location>
</feature>
<feature type="helix" evidence="24">
    <location>
        <begin position="713"/>
        <end position="720"/>
    </location>
</feature>
<feature type="strand" evidence="22">
    <location>
        <begin position="721"/>
        <end position="723"/>
    </location>
</feature>
<feature type="turn" evidence="24">
    <location>
        <begin position="726"/>
        <end position="728"/>
    </location>
</feature>
<feature type="strand" evidence="27">
    <location>
        <begin position="738"/>
        <end position="740"/>
    </location>
</feature>
<feature type="helix" evidence="24">
    <location>
        <begin position="747"/>
        <end position="752"/>
    </location>
</feature>
<feature type="strand" evidence="27">
    <location>
        <begin position="753"/>
        <end position="757"/>
    </location>
</feature>
<feature type="helix" evidence="27">
    <location>
        <begin position="758"/>
        <end position="761"/>
    </location>
</feature>
<feature type="helix" evidence="24">
    <location>
        <begin position="773"/>
        <end position="780"/>
    </location>
</feature>
<feature type="strand" evidence="22">
    <location>
        <begin position="783"/>
        <end position="786"/>
    </location>
</feature>
<feature type="helix" evidence="24">
    <location>
        <begin position="798"/>
        <end position="804"/>
    </location>
</feature>
<feature type="helix" evidence="27">
    <location>
        <begin position="814"/>
        <end position="820"/>
    </location>
</feature>
<feature type="turn" evidence="24">
    <location>
        <begin position="825"/>
        <end position="827"/>
    </location>
</feature>
<feature type="helix" evidence="24">
    <location>
        <begin position="833"/>
        <end position="840"/>
    </location>
</feature>
<feature type="strand" evidence="21">
    <location>
        <begin position="888"/>
        <end position="890"/>
    </location>
</feature>
<feature type="helix" evidence="26">
    <location>
        <begin position="895"/>
        <end position="910"/>
    </location>
</feature>
<feature type="helix" evidence="26">
    <location>
        <begin position="918"/>
        <end position="925"/>
    </location>
</feature>
<feature type="helix" evidence="26">
    <location>
        <begin position="929"/>
        <end position="934"/>
    </location>
</feature>
<feature type="helix" evidence="26">
    <location>
        <begin position="939"/>
        <end position="966"/>
    </location>
</feature>
<feature type="helix" evidence="26">
    <location>
        <begin position="977"/>
        <end position="984"/>
    </location>
</feature>
<feature type="helix" evidence="26">
    <location>
        <begin position="988"/>
        <end position="991"/>
    </location>
</feature>
<feature type="helix" evidence="26">
    <location>
        <begin position="997"/>
        <end position="1025"/>
    </location>
</feature>
<feature type="helix" evidence="26">
    <location>
        <begin position="1033"/>
        <end position="1039"/>
    </location>
</feature>
<feature type="helix" evidence="26">
    <location>
        <begin position="1042"/>
        <end position="1051"/>
    </location>
</feature>
<feature type="helix" evidence="26">
    <location>
        <begin position="1055"/>
        <end position="1058"/>
    </location>
</feature>
<feature type="turn" evidence="26">
    <location>
        <begin position="1059"/>
        <end position="1062"/>
    </location>
</feature>
<feature type="helix" evidence="26">
    <location>
        <begin position="1064"/>
        <end position="1076"/>
    </location>
</feature>
<protein>
    <recommendedName>
        <fullName>Transcription elongation regulator 1</fullName>
    </recommendedName>
    <alternativeName>
        <fullName>TATA box-binding protein-associated factor 2S</fullName>
    </alternativeName>
    <alternativeName>
        <fullName>Transcription factor CA150</fullName>
    </alternativeName>
</protein>
<comment type="function">
    <text evidence="7 9">Transcription factor that binds RNA polymerase II and inhibits the elongation of transcripts from target promoters. Regulates transcription elongation in a TATA box-dependent manner. Necessary for TAT-dependent activation of the human immunodeficiency virus type 1 (HIV-1) promoter.</text>
</comment>
<comment type="subunit">
    <text evidence="1 5 6 7 8 9">Binds formin (By similarity). Interacts (via the second WW domain) with TREX1 (via proline-rich region) (By similarity). Binds RNA polymerase II, HD and SF1.</text>
</comment>
<comment type="interaction">
    <interactant intactId="EBI-473271">
        <id>O14776</id>
    </interactant>
    <interactant intactId="EBI-473181">
        <id>Q99728</id>
        <label>BARD1</label>
    </interactant>
    <organismsDiffer>false</organismsDiffer>
    <experiments>2</experiments>
</comment>
<comment type="interaction">
    <interactant intactId="EBI-473271">
        <id>O14776</id>
    </interactant>
    <interactant intactId="EBI-466029">
        <id>P42858</id>
        <label>HTT</label>
    </interactant>
    <organismsDiffer>false</organismsDiffer>
    <experiments>9</experiments>
</comment>
<comment type="interaction">
    <interactant intactId="EBI-473271">
        <id>O14776</id>
    </interactant>
    <interactant intactId="EBI-473271">
        <id>O14776</id>
        <label>TCERG1</label>
    </interactant>
    <organismsDiffer>false</organismsDiffer>
    <experiments>4</experiments>
</comment>
<comment type="subcellular location">
    <subcellularLocation>
        <location evidence="5 8 9">Nucleus</location>
    </subcellularLocation>
</comment>
<comment type="alternative products">
    <event type="alternative splicing"/>
    <isoform>
        <id>O14776-1</id>
        <name>1</name>
        <sequence type="displayed"/>
    </isoform>
    <isoform>
        <id>O14776-2</id>
        <name>2</name>
        <sequence type="described" ref="VSP_026933"/>
    </isoform>
</comment>
<comment type="tissue specificity">
    <text evidence="6">Detected in brain neurons.</text>
</comment>
<comment type="induction">
    <text evidence="6">Up-regulated in brain tissue from patients with Huntington disease.</text>
</comment>
<comment type="domain">
    <text>The FF domains bind the phosphorylated C-terminus of the largest subunit of RNA polymerase II, probably mediate interaction with HTATSF1 and preferentially bind peptides with the consensus sequence [DE](2-5)-[FWY]-[DE](2-5).</text>
</comment>
<comment type="domain">
    <text>The WW domains bind Pro-rich domains.</text>
</comment>
<comment type="sequence caution" evidence="12">
    <conflict type="erroneous initiation">
        <sequence resource="EMBL-CDS" id="BAD93147"/>
    </conflict>
    <text>Extended N-terminus.</text>
</comment>
<dbReference type="EMBL" id="AF017789">
    <property type="protein sequence ID" value="AAB80727.1"/>
    <property type="molecule type" value="mRNA"/>
</dbReference>
<dbReference type="EMBL" id="AB209910">
    <property type="protein sequence ID" value="BAD93147.1"/>
    <property type="status" value="ALT_INIT"/>
    <property type="molecule type" value="mRNA"/>
</dbReference>
<dbReference type="EMBL" id="BC111727">
    <property type="protein sequence ID" value="AAI11728.1"/>
    <property type="molecule type" value="mRNA"/>
</dbReference>
<dbReference type="CCDS" id="CCDS4282.1">
    <molecule id="O14776-1"/>
</dbReference>
<dbReference type="CCDS" id="CCDS43379.1">
    <molecule id="O14776-2"/>
</dbReference>
<dbReference type="PIR" id="T08599">
    <property type="entry name" value="T08599"/>
</dbReference>
<dbReference type="RefSeq" id="NP_001035095.1">
    <molecule id="O14776-2"/>
    <property type="nucleotide sequence ID" value="NM_001040006.2"/>
</dbReference>
<dbReference type="RefSeq" id="NP_006697.2">
    <molecule id="O14776-1"/>
    <property type="nucleotide sequence ID" value="NM_006706.3"/>
</dbReference>
<dbReference type="PDB" id="2DK7">
    <property type="method" value="NMR"/>
    <property type="chains" value="A=520-579"/>
</dbReference>
<dbReference type="PDB" id="2DOD">
    <property type="method" value="NMR"/>
    <property type="chains" value="A=651-719"/>
</dbReference>
<dbReference type="PDB" id="2DOE">
    <property type="method" value="NMR"/>
    <property type="chains" value="A=784-853"/>
</dbReference>
<dbReference type="PDB" id="2DOF">
    <property type="method" value="NMR"/>
    <property type="chains" value="A=888-959"/>
</dbReference>
<dbReference type="PDB" id="2E71">
    <property type="method" value="NMR"/>
    <property type="chains" value="A=717-786"/>
</dbReference>
<dbReference type="PDB" id="2KIQ">
    <property type="method" value="NMR"/>
    <property type="chains" value="A=724-782"/>
</dbReference>
<dbReference type="PDB" id="2KIS">
    <property type="method" value="NMR"/>
    <property type="chains" value="A=659-724"/>
</dbReference>
<dbReference type="PDB" id="2MW9">
    <property type="method" value="NMR"/>
    <property type="chains" value="A=428-464"/>
</dbReference>
<dbReference type="PDB" id="2MWA">
    <property type="method" value="NMR"/>
    <property type="chains" value="A=428-464"/>
</dbReference>
<dbReference type="PDB" id="2MWB">
    <property type="method" value="NMR"/>
    <property type="chains" value="A=428-464"/>
</dbReference>
<dbReference type="PDB" id="2MWD">
    <property type="method" value="NMR"/>
    <property type="chains" value="A=433-460"/>
</dbReference>
<dbReference type="PDB" id="2MWE">
    <property type="method" value="NMR"/>
    <property type="chains" value="A=433-460"/>
</dbReference>
<dbReference type="PDB" id="2MWF">
    <property type="method" value="NMR"/>
    <property type="chains" value="A=433-464"/>
</dbReference>
<dbReference type="PDB" id="2N4R">
    <property type="method" value="NMR"/>
    <property type="chains" value="A=428-464"/>
</dbReference>
<dbReference type="PDB" id="2N4S">
    <property type="method" value="NMR"/>
    <property type="chains" value="A=428-464"/>
</dbReference>
<dbReference type="PDB" id="2N4T">
    <property type="method" value="NMR"/>
    <property type="chains" value="A=428-464"/>
</dbReference>
<dbReference type="PDB" id="2N4U">
    <property type="method" value="NMR"/>
    <property type="chains" value="A=428-464"/>
</dbReference>
<dbReference type="PDB" id="2N4V">
    <property type="method" value="NMR"/>
    <property type="chains" value="A=428-464"/>
</dbReference>
<dbReference type="PDB" id="2N4W">
    <property type="method" value="NMR"/>
    <property type="chains" value="A=428-464"/>
</dbReference>
<dbReference type="PDB" id="2NNT">
    <property type="method" value="NMR"/>
    <property type="chains" value="A/B/C/D=428-464"/>
</dbReference>
<dbReference type="PDB" id="3HFH">
    <property type="method" value="X-ray"/>
    <property type="resolution" value="2.70 A"/>
    <property type="chains" value="A/B=661-845"/>
</dbReference>
<dbReference type="PDB" id="3Q1I">
    <property type="method" value="X-ray"/>
    <property type="resolution" value="1.40 A"/>
    <property type="chains" value="E=99-107"/>
</dbReference>
<dbReference type="PDB" id="4FQG">
    <property type="method" value="X-ray"/>
    <property type="resolution" value="2.00 A"/>
    <property type="chains" value="A/B=895-1081"/>
</dbReference>
<dbReference type="PDB" id="7ABF">
    <property type="method" value="EM"/>
    <property type="resolution" value="3.90 A"/>
    <property type="chains" value="A4=1-1098"/>
</dbReference>
<dbReference type="PDB" id="7ABG">
    <property type="method" value="EM"/>
    <property type="resolution" value="7.80 A"/>
    <property type="chains" value="A4=1-1098"/>
</dbReference>
<dbReference type="PDB" id="8Q7N">
    <property type="method" value="EM"/>
    <property type="resolution" value="3.10 A"/>
    <property type="chains" value="T=1-1098"/>
</dbReference>
<dbReference type="PDB" id="8QO9">
    <property type="method" value="EM"/>
    <property type="resolution" value="5.29 A"/>
    <property type="chains" value="T=1-1098"/>
</dbReference>
<dbReference type="PDBsum" id="2DK7"/>
<dbReference type="PDBsum" id="2DOD"/>
<dbReference type="PDBsum" id="2DOE"/>
<dbReference type="PDBsum" id="2DOF"/>
<dbReference type="PDBsum" id="2E71"/>
<dbReference type="PDBsum" id="2KIQ"/>
<dbReference type="PDBsum" id="2KIS"/>
<dbReference type="PDBsum" id="2MW9"/>
<dbReference type="PDBsum" id="2MWA"/>
<dbReference type="PDBsum" id="2MWB"/>
<dbReference type="PDBsum" id="2MWD"/>
<dbReference type="PDBsum" id="2MWE"/>
<dbReference type="PDBsum" id="2MWF"/>
<dbReference type="PDBsum" id="2N4R"/>
<dbReference type="PDBsum" id="2N4S"/>
<dbReference type="PDBsum" id="2N4T"/>
<dbReference type="PDBsum" id="2N4U"/>
<dbReference type="PDBsum" id="2N4V"/>
<dbReference type="PDBsum" id="2N4W"/>
<dbReference type="PDBsum" id="2NNT"/>
<dbReference type="PDBsum" id="3HFH"/>
<dbReference type="PDBsum" id="3Q1I"/>
<dbReference type="PDBsum" id="4FQG"/>
<dbReference type="PDBsum" id="7ABF"/>
<dbReference type="PDBsum" id="7ABG"/>
<dbReference type="PDBsum" id="8Q7N"/>
<dbReference type="PDBsum" id="8QO9"/>
<dbReference type="EMDB" id="EMD-11694"/>
<dbReference type="EMDB" id="EMD-11695"/>
<dbReference type="EMDB" id="EMD-18225"/>
<dbReference type="EMDB" id="EMD-18529"/>
<dbReference type="SMR" id="O14776"/>
<dbReference type="BioGRID" id="116120">
    <property type="interactions" value="207"/>
</dbReference>
<dbReference type="CORUM" id="O14776"/>
<dbReference type="DIP" id="DIP-32504N"/>
<dbReference type="FunCoup" id="O14776">
    <property type="interactions" value="4860"/>
</dbReference>
<dbReference type="IntAct" id="O14776">
    <property type="interactions" value="90"/>
</dbReference>
<dbReference type="MINT" id="O14776"/>
<dbReference type="STRING" id="9606.ENSP00000296702"/>
<dbReference type="CarbonylDB" id="O14776"/>
<dbReference type="GlyGen" id="O14776">
    <property type="glycosylation" value="5 sites, 1 O-linked glycan (1 site)"/>
</dbReference>
<dbReference type="iPTMnet" id="O14776"/>
<dbReference type="MetOSite" id="O14776"/>
<dbReference type="PhosphoSitePlus" id="O14776"/>
<dbReference type="SwissPalm" id="O14776"/>
<dbReference type="BioMuta" id="TCERG1"/>
<dbReference type="jPOST" id="O14776"/>
<dbReference type="MassIVE" id="O14776"/>
<dbReference type="PaxDb" id="9606-ENSP00000296702"/>
<dbReference type="PeptideAtlas" id="O14776"/>
<dbReference type="ProteomicsDB" id="48229">
    <molecule id="O14776-1"/>
</dbReference>
<dbReference type="ProteomicsDB" id="48230">
    <molecule id="O14776-2"/>
</dbReference>
<dbReference type="Pumba" id="O14776"/>
<dbReference type="Antibodypedia" id="15805">
    <property type="antibodies" value="186 antibodies from 27 providers"/>
</dbReference>
<dbReference type="DNASU" id="10915"/>
<dbReference type="Ensembl" id="ENST00000296702.9">
    <molecule id="O14776-1"/>
    <property type="protein sequence ID" value="ENSP00000296702.5"/>
    <property type="gene ID" value="ENSG00000113649.14"/>
</dbReference>
<dbReference type="Ensembl" id="ENST00000394421.7">
    <molecule id="O14776-2"/>
    <property type="protein sequence ID" value="ENSP00000377943.2"/>
    <property type="gene ID" value="ENSG00000113649.14"/>
</dbReference>
<dbReference type="GeneID" id="10915"/>
<dbReference type="KEGG" id="hsa:10915"/>
<dbReference type="UCSC" id="uc003lob.4">
    <molecule id="O14776-1"/>
    <property type="organism name" value="human"/>
</dbReference>
<dbReference type="AGR" id="HGNC:15630"/>
<dbReference type="CTD" id="10915"/>
<dbReference type="DisGeNET" id="10915"/>
<dbReference type="GeneCards" id="TCERG1"/>
<dbReference type="HGNC" id="HGNC:15630">
    <property type="gene designation" value="TCERG1"/>
</dbReference>
<dbReference type="HPA" id="ENSG00000113649">
    <property type="expression patterns" value="Low tissue specificity"/>
</dbReference>
<dbReference type="MalaCards" id="TCERG1"/>
<dbReference type="MIM" id="605409">
    <property type="type" value="gene"/>
</dbReference>
<dbReference type="neXtProt" id="NX_O14776"/>
<dbReference type="OpenTargets" id="ENSG00000113649"/>
<dbReference type="PharmGKB" id="PA38007"/>
<dbReference type="VEuPathDB" id="HostDB:ENSG00000113649"/>
<dbReference type="eggNOG" id="KOG0155">
    <property type="taxonomic scope" value="Eukaryota"/>
</dbReference>
<dbReference type="GeneTree" id="ENSGT00940000157770"/>
<dbReference type="HOGENOM" id="CLU_008684_0_0_1"/>
<dbReference type="InParanoid" id="O14776"/>
<dbReference type="OMA" id="MMNGPIG"/>
<dbReference type="OrthoDB" id="63972at2759"/>
<dbReference type="PAN-GO" id="O14776">
    <property type="GO annotations" value="3 GO annotations based on evolutionary models"/>
</dbReference>
<dbReference type="PhylomeDB" id="O14776"/>
<dbReference type="TreeFam" id="TF317748"/>
<dbReference type="PathwayCommons" id="O14776"/>
<dbReference type="Reactome" id="R-HSA-72163">
    <property type="pathway name" value="mRNA Splicing - Major Pathway"/>
</dbReference>
<dbReference type="SignaLink" id="O14776"/>
<dbReference type="BioGRID-ORCS" id="10915">
    <property type="hits" value="296 hits in 1182 CRISPR screens"/>
</dbReference>
<dbReference type="CD-CODE" id="91857CE7">
    <property type="entry name" value="Nucleolus"/>
</dbReference>
<dbReference type="ChiTaRS" id="TCERG1">
    <property type="organism name" value="human"/>
</dbReference>
<dbReference type="EvolutionaryTrace" id="O14776"/>
<dbReference type="GeneWiki" id="Transcription_elongation_regulator_1"/>
<dbReference type="GenomeRNAi" id="10915"/>
<dbReference type="Pharos" id="O14776">
    <property type="development level" value="Tbio"/>
</dbReference>
<dbReference type="PRO" id="PR:O14776"/>
<dbReference type="Proteomes" id="UP000005640">
    <property type="component" value="Chromosome 5"/>
</dbReference>
<dbReference type="RNAct" id="O14776">
    <property type="molecule type" value="protein"/>
</dbReference>
<dbReference type="Bgee" id="ENSG00000113649">
    <property type="expression patterns" value="Expressed in right hemisphere of cerebellum and 136 other cell types or tissues"/>
</dbReference>
<dbReference type="ExpressionAtlas" id="O14776">
    <property type="expression patterns" value="baseline and differential"/>
</dbReference>
<dbReference type="GO" id="GO:0016607">
    <property type="term" value="C:nuclear speck"/>
    <property type="evidence" value="ECO:0000304"/>
    <property type="project" value="ARUK-UCL"/>
</dbReference>
<dbReference type="GO" id="GO:0005654">
    <property type="term" value="C:nucleoplasm"/>
    <property type="evidence" value="ECO:0000314"/>
    <property type="project" value="HPA"/>
</dbReference>
<dbReference type="GO" id="GO:0005634">
    <property type="term" value="C:nucleus"/>
    <property type="evidence" value="ECO:0000318"/>
    <property type="project" value="GO_Central"/>
</dbReference>
<dbReference type="GO" id="GO:0042802">
    <property type="term" value="F:identical protein binding"/>
    <property type="evidence" value="ECO:0000353"/>
    <property type="project" value="IntAct"/>
</dbReference>
<dbReference type="GO" id="GO:0003723">
    <property type="term" value="F:RNA binding"/>
    <property type="evidence" value="ECO:0007005"/>
    <property type="project" value="UniProtKB"/>
</dbReference>
<dbReference type="GO" id="GO:0070063">
    <property type="term" value="F:RNA polymerase binding"/>
    <property type="evidence" value="ECO:0000318"/>
    <property type="project" value="GO_Central"/>
</dbReference>
<dbReference type="GO" id="GO:0061629">
    <property type="term" value="F:RNA polymerase II-specific DNA-binding transcription factor binding"/>
    <property type="evidence" value="ECO:0000353"/>
    <property type="project" value="BHF-UCL"/>
</dbReference>
<dbReference type="GO" id="GO:0003713">
    <property type="term" value="F:transcription coactivator activity"/>
    <property type="evidence" value="ECO:0000304"/>
    <property type="project" value="ProtInc"/>
</dbReference>
<dbReference type="GO" id="GO:0003712">
    <property type="term" value="F:transcription coregulator activity"/>
    <property type="evidence" value="ECO:0000318"/>
    <property type="project" value="GO_Central"/>
</dbReference>
<dbReference type="GO" id="GO:0003714">
    <property type="term" value="F:transcription corepressor activity"/>
    <property type="evidence" value="ECO:0000314"/>
    <property type="project" value="BHF-UCL"/>
</dbReference>
<dbReference type="GO" id="GO:0003711">
    <property type="term" value="F:transcription elongation factor activity"/>
    <property type="evidence" value="ECO:0000304"/>
    <property type="project" value="ARUK-UCL"/>
</dbReference>
<dbReference type="GO" id="GO:0044390">
    <property type="term" value="F:ubiquitin-like protein conjugating enzyme binding"/>
    <property type="evidence" value="ECO:0000353"/>
    <property type="project" value="ARUK-UCL"/>
</dbReference>
<dbReference type="GO" id="GO:0006397">
    <property type="term" value="P:mRNA processing"/>
    <property type="evidence" value="ECO:0000314"/>
    <property type="project" value="ARUK-UCL"/>
</dbReference>
<dbReference type="GO" id="GO:0000122">
    <property type="term" value="P:negative regulation of transcription by RNA polymerase II"/>
    <property type="evidence" value="ECO:0000314"/>
    <property type="project" value="BHF-UCL"/>
</dbReference>
<dbReference type="GO" id="GO:0034244">
    <property type="term" value="P:negative regulation of transcription elongation by RNA polymerase II"/>
    <property type="evidence" value="ECO:0000304"/>
    <property type="project" value="ARUK-UCL"/>
</dbReference>
<dbReference type="GO" id="GO:0045944">
    <property type="term" value="P:positive regulation of transcription by RNA polymerase II"/>
    <property type="evidence" value="ECO:0000314"/>
    <property type="project" value="ARUK-UCL"/>
</dbReference>
<dbReference type="GO" id="GO:0032968">
    <property type="term" value="P:positive regulation of transcription elongation by RNA polymerase II"/>
    <property type="evidence" value="ECO:0000304"/>
    <property type="project" value="ARUK-UCL"/>
</dbReference>
<dbReference type="GO" id="GO:0008380">
    <property type="term" value="P:RNA splicing"/>
    <property type="evidence" value="ECO:0000314"/>
    <property type="project" value="ARUK-UCL"/>
</dbReference>
<dbReference type="CDD" id="cd00201">
    <property type="entry name" value="WW"/>
    <property type="match status" value="3"/>
</dbReference>
<dbReference type="DisProt" id="DP01893"/>
<dbReference type="FunFam" id="1.10.10.440:FF:000005">
    <property type="entry name" value="Transcription elongation regulator 1 (CA150)"/>
    <property type="match status" value="1"/>
</dbReference>
<dbReference type="FunFam" id="1.10.10.440:FF:000006">
    <property type="entry name" value="Transcription elongation regulator 1 (CA150)"/>
    <property type="match status" value="1"/>
</dbReference>
<dbReference type="FunFam" id="1.10.10.440:FF:000008">
    <property type="entry name" value="Transcription elongation regulator 1 (CA150)"/>
    <property type="match status" value="1"/>
</dbReference>
<dbReference type="FunFam" id="1.10.10.440:FF:000010">
    <property type="entry name" value="Transcription elongation regulator 1 (CA150)"/>
    <property type="match status" value="1"/>
</dbReference>
<dbReference type="FunFam" id="2.20.70.10:FF:000010">
    <property type="entry name" value="Transcription elongation regulator 1 (CA150)"/>
    <property type="match status" value="1"/>
</dbReference>
<dbReference type="FunFam" id="2.20.70.10:FF:000015">
    <property type="entry name" value="Transcription elongation regulator 1 (CA150)"/>
    <property type="match status" value="1"/>
</dbReference>
<dbReference type="FunFam" id="2.20.70.10:FF:000016">
    <property type="entry name" value="Transcription elongation regulator 1 (CA150)"/>
    <property type="match status" value="1"/>
</dbReference>
<dbReference type="FunFam" id="1.10.10.440:FF:000001">
    <property type="entry name" value="Transcription elongation regulator 1 like"/>
    <property type="match status" value="1"/>
</dbReference>
<dbReference type="FunFam" id="1.10.10.440:FF:000004">
    <property type="entry name" value="Transcription elongation regulator 1 like"/>
    <property type="match status" value="1"/>
</dbReference>
<dbReference type="Gene3D" id="2.20.70.10">
    <property type="match status" value="3"/>
</dbReference>
<dbReference type="Gene3D" id="1.10.10.440">
    <property type="entry name" value="FF domain"/>
    <property type="match status" value="6"/>
</dbReference>
<dbReference type="InterPro" id="IPR002713">
    <property type="entry name" value="FF_domain"/>
</dbReference>
<dbReference type="InterPro" id="IPR036517">
    <property type="entry name" value="FF_domain_sf"/>
</dbReference>
<dbReference type="InterPro" id="IPR045148">
    <property type="entry name" value="TCRG1-like"/>
</dbReference>
<dbReference type="InterPro" id="IPR001202">
    <property type="entry name" value="WW_dom"/>
</dbReference>
<dbReference type="InterPro" id="IPR036020">
    <property type="entry name" value="WW_dom_sf"/>
</dbReference>
<dbReference type="PANTHER" id="PTHR15377">
    <property type="entry name" value="TRANSCRIPTION ELONGATION REGULATOR 1"/>
    <property type="match status" value="1"/>
</dbReference>
<dbReference type="PANTHER" id="PTHR15377:SF7">
    <property type="entry name" value="TRANSCRIPTION ELONGATION REGULATOR 1"/>
    <property type="match status" value="1"/>
</dbReference>
<dbReference type="Pfam" id="PF01846">
    <property type="entry name" value="FF"/>
    <property type="match status" value="6"/>
</dbReference>
<dbReference type="Pfam" id="PF00397">
    <property type="entry name" value="WW"/>
    <property type="match status" value="2"/>
</dbReference>
<dbReference type="Pfam" id="PF23517">
    <property type="entry name" value="WW_TCERG1"/>
    <property type="match status" value="1"/>
</dbReference>
<dbReference type="SMART" id="SM00441">
    <property type="entry name" value="FF"/>
    <property type="match status" value="6"/>
</dbReference>
<dbReference type="SMART" id="SM00456">
    <property type="entry name" value="WW"/>
    <property type="match status" value="3"/>
</dbReference>
<dbReference type="SUPFAM" id="SSF81698">
    <property type="entry name" value="FF domain"/>
    <property type="match status" value="5"/>
</dbReference>
<dbReference type="SUPFAM" id="SSF51045">
    <property type="entry name" value="WW domain"/>
    <property type="match status" value="3"/>
</dbReference>
<dbReference type="PROSITE" id="PS51676">
    <property type="entry name" value="FF"/>
    <property type="match status" value="6"/>
</dbReference>
<dbReference type="PROSITE" id="PS01159">
    <property type="entry name" value="WW_DOMAIN_1"/>
    <property type="match status" value="1"/>
</dbReference>
<dbReference type="PROSITE" id="PS50020">
    <property type="entry name" value="WW_DOMAIN_2"/>
    <property type="match status" value="3"/>
</dbReference>
<proteinExistence type="evidence at protein level"/>
<reference key="1">
    <citation type="journal article" date="1997" name="Mol. Cell. Biol.">
        <title>CA150, a nuclear protein associated with the RNA polymerase II holoenzyme, is involved in Tat-activated human immunodeficiency virus type 1 transcription.</title>
        <authorList>
            <person name="Sune C."/>
            <person name="Hayashi T."/>
            <person name="Liu Y."/>
            <person name="Lane W.S."/>
            <person name="Young R.A."/>
            <person name="Garcia-Blanco M.A."/>
        </authorList>
    </citation>
    <scope>NUCLEOTIDE SEQUENCE [MRNA] (ISOFORM 1)</scope>
    <scope>PROTEIN SEQUENCE OF 610-620; 745-753; 928-939 AND 945-955</scope>
    <scope>FUNCTION</scope>
    <scope>SUBCELLULAR LOCATION</scope>
    <scope>INTERACTION WITH RNA POLYMERASE II</scope>
    <source>
        <tissue>Cervix carcinoma</tissue>
    </source>
</reference>
<reference key="2">
    <citation type="submission" date="2005-03" db="EMBL/GenBank/DDBJ databases">
        <authorList>
            <person name="Totoki Y."/>
            <person name="Toyoda A."/>
            <person name="Takeda T."/>
            <person name="Sakaki Y."/>
            <person name="Tanaka A."/>
            <person name="Yokoyama S."/>
            <person name="Ohara O."/>
            <person name="Nagase T."/>
            <person name="Kikuno R.F."/>
        </authorList>
    </citation>
    <scope>NUCLEOTIDE SEQUENCE [LARGE SCALE MRNA] (ISOFORM 2)</scope>
    <source>
        <tissue>Aortic endothelium</tissue>
    </source>
</reference>
<reference key="3">
    <citation type="journal article" date="2004" name="Genome Res.">
        <title>The status, quality, and expansion of the NIH full-length cDNA project: the Mammalian Gene Collection (MGC).</title>
        <authorList>
            <consortium name="The MGC Project Team"/>
        </authorList>
    </citation>
    <scope>NUCLEOTIDE SEQUENCE [LARGE SCALE MRNA] (ISOFORM 2)</scope>
</reference>
<reference key="4">
    <citation type="journal article" date="2000" name="Proc. Natl. Acad. Sci. U.S.A.">
        <title>Protein-interaction modules that organize nuclear function: FF domains of CA150 bind the phosphoCTD of RNA polymerase II.</title>
        <authorList>
            <person name="Carty S.M."/>
            <person name="Goldstrohm A.C."/>
            <person name="Sune C."/>
            <person name="Garcia-Blanco M.A."/>
            <person name="Greenleaf A.L."/>
        </authorList>
    </citation>
    <scope>SUBCELLULAR LOCATION</scope>
    <scope>IDENTIFICATION BY MASS SPECTROMETRY</scope>
    <scope>INTERACTION WITH RNA POLYMERASE II</scope>
</reference>
<reference key="5">
    <citation type="journal article" date="2001" name="Mol. Cell. Biol.">
        <title>The transcription elongation factor CA150 interacts with RNA polymerase II and the pre-mRNA splicing factor SF1.</title>
        <authorList>
            <person name="Goldstrohm A.C."/>
            <person name="Albrecht T.R."/>
            <person name="Sune C."/>
            <person name="Bedford M.T."/>
            <person name="Garcia-Blanco M.A."/>
        </authorList>
    </citation>
    <scope>FUNCTION</scope>
    <scope>MUTAGENESIS OF 148-TYR--TYR-150; 446-TYR--TYR-448 AND 545-PHE--TYR-547</scope>
    <scope>INTERACTION WITH RNA POLYMERASE II AND SF1</scope>
</reference>
<reference key="6">
    <citation type="journal article" date="2001" name="Proc. Natl. Acad. Sci. U.S.A.">
        <title>The Gln-Ala repeat transcriptional activator CA150 interacts with huntingtin: neuropathologic and genetic evidence for a role in Huntington's disease pathogenesis.</title>
        <authorList>
            <person name="Holbert S."/>
            <person name="Denghien I."/>
            <person name="Kiechle T."/>
            <person name="Rosenblatt A."/>
            <person name="Wellington C."/>
            <person name="Hayden M.R."/>
            <person name="Margolis R.L."/>
            <person name="Ross C.A."/>
            <person name="Dausset J."/>
            <person name="Ferrante R.J."/>
            <person name="Neri C."/>
        </authorList>
    </citation>
    <scope>INTERACTION WITH HD</scope>
    <scope>INDUCTION</scope>
    <scope>TISSUE SPECIFICITY</scope>
</reference>
<reference key="7">
    <citation type="journal article" date="2004" name="Mol. Cell. Biol.">
        <title>FF domains of CA150 bind transcription and splicing factors through multiple weak interactions.</title>
        <authorList>
            <person name="Smith M.J."/>
            <person name="Kulkarni S."/>
            <person name="Pawson T."/>
        </authorList>
    </citation>
    <scope>INTERACTION WITH HTATSF1</scope>
    <scope>SUBCELLULAR LOCATION</scope>
</reference>
<reference key="8">
    <citation type="journal article" date="2011" name="BMC Syst. Biol.">
        <title>Initial characterization of the human central proteome.</title>
        <authorList>
            <person name="Burkard T.R."/>
            <person name="Planyavsky M."/>
            <person name="Kaupe I."/>
            <person name="Breitwieser F.P."/>
            <person name="Buerckstuemmer T."/>
            <person name="Bennett K.L."/>
            <person name="Superti-Furga G."/>
            <person name="Colinge J."/>
        </authorList>
    </citation>
    <scope>IDENTIFICATION BY MASS SPECTROMETRY [LARGE SCALE ANALYSIS]</scope>
</reference>
<reference key="9">
    <citation type="journal article" date="2013" name="J. Proteome Res.">
        <title>Toward a comprehensive characterization of a human cancer cell phosphoproteome.</title>
        <authorList>
            <person name="Zhou H."/>
            <person name="Di Palma S."/>
            <person name="Preisinger C."/>
            <person name="Peng M."/>
            <person name="Polat A.N."/>
            <person name="Heck A.J."/>
            <person name="Mohammed S."/>
        </authorList>
    </citation>
    <scope>PHOSPHORYLATION [LARGE SCALE ANALYSIS] AT SER-11; SER-638; SER-834 AND SER-933</scope>
    <scope>IDENTIFICATION BY MASS SPECTROMETRY [LARGE SCALE ANALYSIS]</scope>
    <source>
        <tissue>Cervix carcinoma</tissue>
        <tissue>Erythroleukemia</tissue>
    </source>
</reference>
<reference key="10">
    <citation type="journal article" date="2014" name="Mol. Cell. Proteomics">
        <title>Immunoaffinity enrichment and mass spectrometry analysis of protein methylation.</title>
        <authorList>
            <person name="Guo A."/>
            <person name="Gu H."/>
            <person name="Zhou J."/>
            <person name="Mulhern D."/>
            <person name="Wang Y."/>
            <person name="Lee K.A."/>
            <person name="Yang V."/>
            <person name="Aguiar M."/>
            <person name="Kornhauser J."/>
            <person name="Jia X."/>
            <person name="Ren J."/>
            <person name="Beausoleil S.A."/>
            <person name="Silva J.C."/>
            <person name="Vemulapalli V."/>
            <person name="Bedford M.T."/>
            <person name="Comb M.J."/>
        </authorList>
    </citation>
    <scope>METHYLATION [LARGE SCALE ANALYSIS] AT ARG-20; ARG-28; ARG-30; ARG-41 AND ARG-48</scope>
    <scope>IDENTIFICATION BY MASS SPECTROMETRY [LARGE SCALE ANALYSIS]</scope>
    <source>
        <tissue>Colon carcinoma</tissue>
    </source>
</reference>
<reference key="11">
    <citation type="journal article" date="2014" name="Nat. Struct. Mol. Biol.">
        <title>Uncovering global SUMOylation signaling networks in a site-specific manner.</title>
        <authorList>
            <person name="Hendriks I.A."/>
            <person name="D'Souza R.C."/>
            <person name="Yang B."/>
            <person name="Verlaan-de Vries M."/>
            <person name="Mann M."/>
            <person name="Vertegaal A.C."/>
        </authorList>
    </citation>
    <scope>SUMOYLATION [LARGE SCALE ANALYSIS] AT LYS-503</scope>
    <scope>IDENTIFICATION BY MASS SPECTROMETRY [LARGE SCALE ANALYSIS]</scope>
</reference>
<reference key="12">
    <citation type="journal article" date="2015" name="Cell Rep.">
        <title>SUMO-2 orchestrates chromatin modifiers in response to DNA damage.</title>
        <authorList>
            <person name="Hendriks I.A."/>
            <person name="Treffers L.W."/>
            <person name="Verlaan-de Vries M."/>
            <person name="Olsen J.V."/>
            <person name="Vertegaal A.C."/>
        </authorList>
    </citation>
    <scope>SUMOYLATION [LARGE SCALE ANALYSIS] AT LYS-503</scope>
    <scope>IDENTIFICATION BY MASS SPECTROMETRY [LARGE SCALE ANALYSIS]</scope>
</reference>
<reference key="13">
    <citation type="journal article" date="2015" name="Mol. Cell. Proteomics">
        <title>System-wide analysis of SUMOylation dynamics in response to replication stress reveals novel small ubiquitin-like modified target proteins and acceptor lysines relevant for genome stability.</title>
        <authorList>
            <person name="Xiao Z."/>
            <person name="Chang J.G."/>
            <person name="Hendriks I.A."/>
            <person name="Sigurdsson J.O."/>
            <person name="Olsen J.V."/>
            <person name="Vertegaal A.C."/>
        </authorList>
    </citation>
    <scope>SUMOYLATION [LARGE SCALE ANALYSIS] AT LYS-503</scope>
    <scope>IDENTIFICATION BY MASS SPECTROMETRY [LARGE SCALE ANALYSIS]</scope>
</reference>
<reference key="14">
    <citation type="journal article" date="2017" name="Nat. Struct. Mol. Biol.">
        <title>Site-specific mapping of the human SUMO proteome reveals co-modification with phosphorylation.</title>
        <authorList>
            <person name="Hendriks I.A."/>
            <person name="Lyon D."/>
            <person name="Young C."/>
            <person name="Jensen L.J."/>
            <person name="Vertegaal A.C."/>
            <person name="Nielsen M.L."/>
        </authorList>
    </citation>
    <scope>SUMOYLATION [LARGE SCALE ANALYSIS] AT LYS-503; LYS-507 AND LYS-608</scope>
    <scope>IDENTIFICATION BY MASS SPECTROMETRY [LARGE SCALE ANALYSIS]</scope>
</reference>
<reference key="15">
    <citation type="journal article" date="2006" name="Proc. Natl. Acad. Sci. U.S.A.">
        <title>General structural motifs of amyloid protofilaments.</title>
        <authorList>
            <person name="Ferguson N."/>
            <person name="Becker J."/>
            <person name="Tidow H."/>
            <person name="Tremmel S."/>
            <person name="Sharpe T.D."/>
            <person name="Krause G."/>
            <person name="Flinders J."/>
            <person name="Petrovich M."/>
            <person name="Berriman J."/>
            <person name="Oschkinat H."/>
            <person name="Fersht A.R."/>
        </authorList>
    </citation>
    <scope>STRUCTURE BY NMR OF 428-464</scope>
</reference>
<reference key="16">
    <citation type="submission" date="2007-04" db="PDB data bank">
        <title>Solution structure of WW domain and FF domains in transcription elongation regulator 1.</title>
        <authorList>
            <consortium name="RIKEN structural genomics initiative (RSGI)"/>
        </authorList>
    </citation>
    <scope>STRUCTURE BY NMR OF 520-959</scope>
</reference>
<organism>
    <name type="scientific">Homo sapiens</name>
    <name type="common">Human</name>
    <dbReference type="NCBI Taxonomy" id="9606"/>
    <lineage>
        <taxon>Eukaryota</taxon>
        <taxon>Metazoa</taxon>
        <taxon>Chordata</taxon>
        <taxon>Craniata</taxon>
        <taxon>Vertebrata</taxon>
        <taxon>Euteleostomi</taxon>
        <taxon>Mammalia</taxon>
        <taxon>Eutheria</taxon>
        <taxon>Euarchontoglires</taxon>
        <taxon>Primates</taxon>
        <taxon>Haplorrhini</taxon>
        <taxon>Catarrhini</taxon>
        <taxon>Hominidae</taxon>
        <taxon>Homo</taxon>
    </lineage>
</organism>
<keyword id="KW-0002">3D-structure</keyword>
<keyword id="KW-0010">Activator</keyword>
<keyword id="KW-0025">Alternative splicing</keyword>
<keyword id="KW-0175">Coiled coil</keyword>
<keyword id="KW-0903">Direct protein sequencing</keyword>
<keyword id="KW-1017">Isopeptide bond</keyword>
<keyword id="KW-0488">Methylation</keyword>
<keyword id="KW-0539">Nucleus</keyword>
<keyword id="KW-0597">Phosphoprotein</keyword>
<keyword id="KW-1267">Proteomics identification</keyword>
<keyword id="KW-1185">Reference proteome</keyword>
<keyword id="KW-0677">Repeat</keyword>
<keyword id="KW-0678">Repressor</keyword>
<keyword id="KW-0804">Transcription</keyword>
<keyword id="KW-0805">Transcription regulation</keyword>
<keyword id="KW-0832">Ubl conjugation</keyword>
<gene>
    <name type="primary">TCERG1</name>
    <name type="synonym">CA150</name>
    <name type="synonym">TAF2S</name>
</gene>
<name>TCRG1_HUMAN</name>